<accession>Q7VW29</accession>
<gene>
    <name evidence="1" type="primary">fabH</name>
    <name type="ordered locus">BP2443</name>
</gene>
<sequence length="328" mass="34920">MEKAMKYAKIAGSGGYLPERVVTNDDLAAELATRQISTSDEWIVERTGIRQRHLAERGVTTSQLATEAARRAMDDAGVQADEIDMIIVATSTPDYVFPSTACLVQANLGAKGGAAFDVQAVCSGFVYAMTTADNFIRAGRARCALVIGAEVFSRILDWNDRGTCVLFGDGAGAVVLKAADEPGILAAHLHADGSQTKILCAAGNVAYGDVTGDPFLRMDGQAVFKQAVTVLDRSARDVCAEAGVEVDDIDWLIPHQANVRILNFLARKLRVPTERVVITMDQHANTSAASVPLALDVARRDGRVKPGQLVLMQGVGGGFTWGSVLARM</sequence>
<organism>
    <name type="scientific">Bordetella pertussis (strain Tohama I / ATCC BAA-589 / NCTC 13251)</name>
    <dbReference type="NCBI Taxonomy" id="257313"/>
    <lineage>
        <taxon>Bacteria</taxon>
        <taxon>Pseudomonadati</taxon>
        <taxon>Pseudomonadota</taxon>
        <taxon>Betaproteobacteria</taxon>
        <taxon>Burkholderiales</taxon>
        <taxon>Alcaligenaceae</taxon>
        <taxon>Bordetella</taxon>
    </lineage>
</organism>
<protein>
    <recommendedName>
        <fullName evidence="1">Beta-ketoacyl-[acyl-carrier-protein] synthase III</fullName>
        <shortName evidence="1">Beta-ketoacyl-ACP synthase III</shortName>
        <shortName evidence="1">KAS III</shortName>
        <ecNumber evidence="1">2.3.1.180</ecNumber>
    </recommendedName>
    <alternativeName>
        <fullName evidence="1">3-oxoacyl-[acyl-carrier-protein] synthase 3</fullName>
    </alternativeName>
    <alternativeName>
        <fullName evidence="1">3-oxoacyl-[acyl-carrier-protein] synthase III</fullName>
    </alternativeName>
</protein>
<comment type="function">
    <text evidence="1">Catalyzes the condensation reaction of fatty acid synthesis by the addition to an acyl acceptor of two carbons from malonyl-ACP. Catalyzes the first condensation reaction which initiates fatty acid synthesis and may therefore play a role in governing the total rate of fatty acid production. Possesses both acetoacetyl-ACP synthase and acetyl transacylase activities. Its substrate specificity determines the biosynthesis of branched-chain and/or straight-chain of fatty acids.</text>
</comment>
<comment type="catalytic activity">
    <reaction evidence="1">
        <text>malonyl-[ACP] + acetyl-CoA + H(+) = 3-oxobutanoyl-[ACP] + CO2 + CoA</text>
        <dbReference type="Rhea" id="RHEA:12080"/>
        <dbReference type="Rhea" id="RHEA-COMP:9623"/>
        <dbReference type="Rhea" id="RHEA-COMP:9625"/>
        <dbReference type="ChEBI" id="CHEBI:15378"/>
        <dbReference type="ChEBI" id="CHEBI:16526"/>
        <dbReference type="ChEBI" id="CHEBI:57287"/>
        <dbReference type="ChEBI" id="CHEBI:57288"/>
        <dbReference type="ChEBI" id="CHEBI:78449"/>
        <dbReference type="ChEBI" id="CHEBI:78450"/>
        <dbReference type="EC" id="2.3.1.180"/>
    </reaction>
</comment>
<comment type="pathway">
    <text evidence="1">Lipid metabolism; fatty acid biosynthesis.</text>
</comment>
<comment type="subunit">
    <text evidence="1">Homodimer.</text>
</comment>
<comment type="subcellular location">
    <subcellularLocation>
        <location evidence="1">Cytoplasm</location>
    </subcellularLocation>
</comment>
<comment type="domain">
    <text evidence="1">The last Arg residue of the ACP-binding site is essential for the weak association between ACP/AcpP and FabH.</text>
</comment>
<comment type="similarity">
    <text evidence="1">Belongs to the thiolase-like superfamily. FabH family.</text>
</comment>
<name>FABH_BORPE</name>
<dbReference type="EC" id="2.3.1.180" evidence="1"/>
<dbReference type="EMBL" id="BX640418">
    <property type="protein sequence ID" value="CAE42715.1"/>
    <property type="molecule type" value="Genomic_DNA"/>
</dbReference>
<dbReference type="RefSeq" id="NP_881071.1">
    <property type="nucleotide sequence ID" value="NC_002929.2"/>
</dbReference>
<dbReference type="RefSeq" id="WP_010930935.1">
    <property type="nucleotide sequence ID" value="NZ_CP039022.1"/>
</dbReference>
<dbReference type="SMR" id="Q7VW29"/>
<dbReference type="STRING" id="257313.BP2443"/>
<dbReference type="PaxDb" id="257313-BP2443"/>
<dbReference type="KEGG" id="bpe:BP2443"/>
<dbReference type="PATRIC" id="fig|257313.5.peg.2633"/>
<dbReference type="eggNOG" id="COG0332">
    <property type="taxonomic scope" value="Bacteria"/>
</dbReference>
<dbReference type="HOGENOM" id="CLU_039592_3_1_4"/>
<dbReference type="UniPathway" id="UPA00094"/>
<dbReference type="Proteomes" id="UP000002676">
    <property type="component" value="Chromosome"/>
</dbReference>
<dbReference type="GO" id="GO:0005737">
    <property type="term" value="C:cytoplasm"/>
    <property type="evidence" value="ECO:0007669"/>
    <property type="project" value="UniProtKB-SubCell"/>
</dbReference>
<dbReference type="GO" id="GO:0004315">
    <property type="term" value="F:3-oxoacyl-[acyl-carrier-protein] synthase activity"/>
    <property type="evidence" value="ECO:0007669"/>
    <property type="project" value="InterPro"/>
</dbReference>
<dbReference type="GO" id="GO:0033818">
    <property type="term" value="F:beta-ketoacyl-acyl-carrier-protein synthase III activity"/>
    <property type="evidence" value="ECO:0007669"/>
    <property type="project" value="UniProtKB-UniRule"/>
</dbReference>
<dbReference type="GO" id="GO:0006633">
    <property type="term" value="P:fatty acid biosynthetic process"/>
    <property type="evidence" value="ECO:0007669"/>
    <property type="project" value="UniProtKB-UniRule"/>
</dbReference>
<dbReference type="GO" id="GO:0044550">
    <property type="term" value="P:secondary metabolite biosynthetic process"/>
    <property type="evidence" value="ECO:0007669"/>
    <property type="project" value="TreeGrafter"/>
</dbReference>
<dbReference type="CDD" id="cd00830">
    <property type="entry name" value="KAS_III"/>
    <property type="match status" value="1"/>
</dbReference>
<dbReference type="FunFam" id="3.40.47.10:FF:000004">
    <property type="entry name" value="3-oxoacyl-[acyl-carrier-protein] synthase 3"/>
    <property type="match status" value="1"/>
</dbReference>
<dbReference type="Gene3D" id="3.40.47.10">
    <property type="match status" value="1"/>
</dbReference>
<dbReference type="HAMAP" id="MF_01815">
    <property type="entry name" value="FabH"/>
    <property type="match status" value="1"/>
</dbReference>
<dbReference type="InterPro" id="IPR013747">
    <property type="entry name" value="ACP_syn_III_C"/>
</dbReference>
<dbReference type="InterPro" id="IPR013751">
    <property type="entry name" value="ACP_syn_III_N"/>
</dbReference>
<dbReference type="InterPro" id="IPR004655">
    <property type="entry name" value="FabH"/>
</dbReference>
<dbReference type="InterPro" id="IPR016039">
    <property type="entry name" value="Thiolase-like"/>
</dbReference>
<dbReference type="NCBIfam" id="TIGR00747">
    <property type="entry name" value="fabH"/>
    <property type="match status" value="1"/>
</dbReference>
<dbReference type="NCBIfam" id="NF006829">
    <property type="entry name" value="PRK09352.1"/>
    <property type="match status" value="1"/>
</dbReference>
<dbReference type="PANTHER" id="PTHR34069">
    <property type="entry name" value="3-OXOACYL-[ACYL-CARRIER-PROTEIN] SYNTHASE 3"/>
    <property type="match status" value="1"/>
</dbReference>
<dbReference type="PANTHER" id="PTHR34069:SF2">
    <property type="entry name" value="BETA-KETOACYL-[ACYL-CARRIER-PROTEIN] SYNTHASE III"/>
    <property type="match status" value="1"/>
</dbReference>
<dbReference type="Pfam" id="PF08545">
    <property type="entry name" value="ACP_syn_III"/>
    <property type="match status" value="1"/>
</dbReference>
<dbReference type="Pfam" id="PF08541">
    <property type="entry name" value="ACP_syn_III_C"/>
    <property type="match status" value="1"/>
</dbReference>
<dbReference type="SUPFAM" id="SSF53901">
    <property type="entry name" value="Thiolase-like"/>
    <property type="match status" value="1"/>
</dbReference>
<evidence type="ECO:0000255" key="1">
    <source>
        <dbReference type="HAMAP-Rule" id="MF_01815"/>
    </source>
</evidence>
<reference key="1">
    <citation type="journal article" date="2003" name="Nat. Genet.">
        <title>Comparative analysis of the genome sequences of Bordetella pertussis, Bordetella parapertussis and Bordetella bronchiseptica.</title>
        <authorList>
            <person name="Parkhill J."/>
            <person name="Sebaihia M."/>
            <person name="Preston A."/>
            <person name="Murphy L.D."/>
            <person name="Thomson N.R."/>
            <person name="Harris D.E."/>
            <person name="Holden M.T.G."/>
            <person name="Churcher C.M."/>
            <person name="Bentley S.D."/>
            <person name="Mungall K.L."/>
            <person name="Cerdeno-Tarraga A.-M."/>
            <person name="Temple L."/>
            <person name="James K.D."/>
            <person name="Harris B."/>
            <person name="Quail M.A."/>
            <person name="Achtman M."/>
            <person name="Atkin R."/>
            <person name="Baker S."/>
            <person name="Basham D."/>
            <person name="Bason N."/>
            <person name="Cherevach I."/>
            <person name="Chillingworth T."/>
            <person name="Collins M."/>
            <person name="Cronin A."/>
            <person name="Davis P."/>
            <person name="Doggett J."/>
            <person name="Feltwell T."/>
            <person name="Goble A."/>
            <person name="Hamlin N."/>
            <person name="Hauser H."/>
            <person name="Holroyd S."/>
            <person name="Jagels K."/>
            <person name="Leather S."/>
            <person name="Moule S."/>
            <person name="Norberczak H."/>
            <person name="O'Neil S."/>
            <person name="Ormond D."/>
            <person name="Price C."/>
            <person name="Rabbinowitsch E."/>
            <person name="Rutter S."/>
            <person name="Sanders M."/>
            <person name="Saunders D."/>
            <person name="Seeger K."/>
            <person name="Sharp S."/>
            <person name="Simmonds M."/>
            <person name="Skelton J."/>
            <person name="Squares R."/>
            <person name="Squares S."/>
            <person name="Stevens K."/>
            <person name="Unwin L."/>
            <person name="Whitehead S."/>
            <person name="Barrell B.G."/>
            <person name="Maskell D.J."/>
        </authorList>
    </citation>
    <scope>NUCLEOTIDE SEQUENCE [LARGE SCALE GENOMIC DNA]</scope>
    <source>
        <strain>Tohama I / ATCC BAA-589 / NCTC 13251</strain>
    </source>
</reference>
<keyword id="KW-0012">Acyltransferase</keyword>
<keyword id="KW-0963">Cytoplasm</keyword>
<keyword id="KW-0275">Fatty acid biosynthesis</keyword>
<keyword id="KW-0276">Fatty acid metabolism</keyword>
<keyword id="KW-0444">Lipid biosynthesis</keyword>
<keyword id="KW-0443">Lipid metabolism</keyword>
<keyword id="KW-0511">Multifunctional enzyme</keyword>
<keyword id="KW-1185">Reference proteome</keyword>
<keyword id="KW-0808">Transferase</keyword>
<feature type="chain" id="PRO_0000110405" description="Beta-ketoacyl-[acyl-carrier-protein] synthase III">
    <location>
        <begin position="1"/>
        <end position="328"/>
    </location>
</feature>
<feature type="region of interest" description="ACP-binding" evidence="1">
    <location>
        <begin position="256"/>
        <end position="260"/>
    </location>
</feature>
<feature type="active site" evidence="1">
    <location>
        <position position="122"/>
    </location>
</feature>
<feature type="active site" evidence="1">
    <location>
        <position position="255"/>
    </location>
</feature>
<feature type="active site" evidence="1">
    <location>
        <position position="285"/>
    </location>
</feature>
<proteinExistence type="inferred from homology"/>